<comment type="function">
    <text evidence="1">Catalyzes the radical-mediated insertion of two sulfur atoms into the C-6 and C-8 positions of the octanoyl moiety bound to the lipoyl domains of lipoate-dependent enzymes, thereby converting the octanoylated domains into lipoylated derivatives.</text>
</comment>
<comment type="catalytic activity">
    <reaction evidence="1">
        <text>[[Fe-S] cluster scaffold protein carrying a second [4Fe-4S](2+) cluster] + N(6)-octanoyl-L-lysyl-[protein] + 2 oxidized [2Fe-2S]-[ferredoxin] + 2 S-adenosyl-L-methionine + 4 H(+) = [[Fe-S] cluster scaffold protein] + N(6)-[(R)-dihydrolipoyl]-L-lysyl-[protein] + 4 Fe(3+) + 2 hydrogen sulfide + 2 5'-deoxyadenosine + 2 L-methionine + 2 reduced [2Fe-2S]-[ferredoxin]</text>
        <dbReference type="Rhea" id="RHEA:16585"/>
        <dbReference type="Rhea" id="RHEA-COMP:9928"/>
        <dbReference type="Rhea" id="RHEA-COMP:10000"/>
        <dbReference type="Rhea" id="RHEA-COMP:10001"/>
        <dbReference type="Rhea" id="RHEA-COMP:10475"/>
        <dbReference type="Rhea" id="RHEA-COMP:14568"/>
        <dbReference type="Rhea" id="RHEA-COMP:14569"/>
        <dbReference type="ChEBI" id="CHEBI:15378"/>
        <dbReference type="ChEBI" id="CHEBI:17319"/>
        <dbReference type="ChEBI" id="CHEBI:29034"/>
        <dbReference type="ChEBI" id="CHEBI:29919"/>
        <dbReference type="ChEBI" id="CHEBI:33722"/>
        <dbReference type="ChEBI" id="CHEBI:33737"/>
        <dbReference type="ChEBI" id="CHEBI:33738"/>
        <dbReference type="ChEBI" id="CHEBI:57844"/>
        <dbReference type="ChEBI" id="CHEBI:59789"/>
        <dbReference type="ChEBI" id="CHEBI:78809"/>
        <dbReference type="ChEBI" id="CHEBI:83100"/>
        <dbReference type="EC" id="2.8.1.8"/>
    </reaction>
</comment>
<comment type="cofactor">
    <cofactor evidence="1">
        <name>[4Fe-4S] cluster</name>
        <dbReference type="ChEBI" id="CHEBI:49883"/>
    </cofactor>
    <text evidence="1">Binds 2 [4Fe-4S] clusters per subunit. One cluster is coordinated with 3 cysteines and an exchangeable S-adenosyl-L-methionine.</text>
</comment>
<comment type="pathway">
    <text evidence="1">Protein modification; protein lipoylation via endogenous pathway; protein N(6)-(lipoyl)lysine from octanoyl-[acyl-carrier-protein]: step 2/2.</text>
</comment>
<comment type="subcellular location">
    <subcellularLocation>
        <location evidence="1">Cytoplasm</location>
    </subcellularLocation>
</comment>
<comment type="similarity">
    <text evidence="1">Belongs to the radical SAM superfamily. Lipoyl synthase family.</text>
</comment>
<dbReference type="EC" id="2.8.1.8" evidence="1"/>
<dbReference type="EMBL" id="CP000681">
    <property type="protein sequence ID" value="ABP76595.1"/>
    <property type="molecule type" value="Genomic_DNA"/>
</dbReference>
<dbReference type="SMR" id="A4Y9G2"/>
<dbReference type="STRING" id="319224.Sputcn32_2876"/>
<dbReference type="KEGG" id="spc:Sputcn32_2876"/>
<dbReference type="eggNOG" id="COG0320">
    <property type="taxonomic scope" value="Bacteria"/>
</dbReference>
<dbReference type="HOGENOM" id="CLU_033144_2_1_6"/>
<dbReference type="UniPathway" id="UPA00538">
    <property type="reaction ID" value="UER00593"/>
</dbReference>
<dbReference type="GO" id="GO:0005737">
    <property type="term" value="C:cytoplasm"/>
    <property type="evidence" value="ECO:0007669"/>
    <property type="project" value="UniProtKB-SubCell"/>
</dbReference>
<dbReference type="GO" id="GO:0051539">
    <property type="term" value="F:4 iron, 4 sulfur cluster binding"/>
    <property type="evidence" value="ECO:0007669"/>
    <property type="project" value="UniProtKB-UniRule"/>
</dbReference>
<dbReference type="GO" id="GO:0016992">
    <property type="term" value="F:lipoate synthase activity"/>
    <property type="evidence" value="ECO:0007669"/>
    <property type="project" value="UniProtKB-UniRule"/>
</dbReference>
<dbReference type="GO" id="GO:0046872">
    <property type="term" value="F:metal ion binding"/>
    <property type="evidence" value="ECO:0007669"/>
    <property type="project" value="UniProtKB-KW"/>
</dbReference>
<dbReference type="CDD" id="cd01335">
    <property type="entry name" value="Radical_SAM"/>
    <property type="match status" value="1"/>
</dbReference>
<dbReference type="FunFam" id="3.20.20.70:FF:000023">
    <property type="entry name" value="Lipoyl synthase"/>
    <property type="match status" value="1"/>
</dbReference>
<dbReference type="Gene3D" id="3.20.20.70">
    <property type="entry name" value="Aldolase class I"/>
    <property type="match status" value="1"/>
</dbReference>
<dbReference type="HAMAP" id="MF_00206">
    <property type="entry name" value="Lipoyl_synth"/>
    <property type="match status" value="1"/>
</dbReference>
<dbReference type="InterPro" id="IPR013785">
    <property type="entry name" value="Aldolase_TIM"/>
</dbReference>
<dbReference type="InterPro" id="IPR006638">
    <property type="entry name" value="Elp3/MiaA/NifB-like_rSAM"/>
</dbReference>
<dbReference type="InterPro" id="IPR003698">
    <property type="entry name" value="Lipoyl_synth"/>
</dbReference>
<dbReference type="InterPro" id="IPR007197">
    <property type="entry name" value="rSAM"/>
</dbReference>
<dbReference type="NCBIfam" id="TIGR00510">
    <property type="entry name" value="lipA"/>
    <property type="match status" value="1"/>
</dbReference>
<dbReference type="NCBIfam" id="NF004019">
    <property type="entry name" value="PRK05481.1"/>
    <property type="match status" value="1"/>
</dbReference>
<dbReference type="NCBIfam" id="NF009544">
    <property type="entry name" value="PRK12928.1"/>
    <property type="match status" value="1"/>
</dbReference>
<dbReference type="PANTHER" id="PTHR10949">
    <property type="entry name" value="LIPOYL SYNTHASE"/>
    <property type="match status" value="1"/>
</dbReference>
<dbReference type="PANTHER" id="PTHR10949:SF0">
    <property type="entry name" value="LIPOYL SYNTHASE, MITOCHONDRIAL"/>
    <property type="match status" value="1"/>
</dbReference>
<dbReference type="Pfam" id="PF04055">
    <property type="entry name" value="Radical_SAM"/>
    <property type="match status" value="1"/>
</dbReference>
<dbReference type="PIRSF" id="PIRSF005963">
    <property type="entry name" value="Lipoyl_synth"/>
    <property type="match status" value="1"/>
</dbReference>
<dbReference type="SFLD" id="SFLDF00271">
    <property type="entry name" value="lipoyl_synthase"/>
    <property type="match status" value="1"/>
</dbReference>
<dbReference type="SFLD" id="SFLDG01058">
    <property type="entry name" value="lipoyl_synthase_like"/>
    <property type="match status" value="1"/>
</dbReference>
<dbReference type="SMART" id="SM00729">
    <property type="entry name" value="Elp3"/>
    <property type="match status" value="1"/>
</dbReference>
<dbReference type="SUPFAM" id="SSF102114">
    <property type="entry name" value="Radical SAM enzymes"/>
    <property type="match status" value="1"/>
</dbReference>
<dbReference type="PROSITE" id="PS51918">
    <property type="entry name" value="RADICAL_SAM"/>
    <property type="match status" value="1"/>
</dbReference>
<reference key="1">
    <citation type="submission" date="2007-04" db="EMBL/GenBank/DDBJ databases">
        <title>Complete sequence of Shewanella putrefaciens CN-32.</title>
        <authorList>
            <consortium name="US DOE Joint Genome Institute"/>
            <person name="Copeland A."/>
            <person name="Lucas S."/>
            <person name="Lapidus A."/>
            <person name="Barry K."/>
            <person name="Detter J.C."/>
            <person name="Glavina del Rio T."/>
            <person name="Hammon N."/>
            <person name="Israni S."/>
            <person name="Dalin E."/>
            <person name="Tice H."/>
            <person name="Pitluck S."/>
            <person name="Chain P."/>
            <person name="Malfatti S."/>
            <person name="Shin M."/>
            <person name="Vergez L."/>
            <person name="Schmutz J."/>
            <person name="Larimer F."/>
            <person name="Land M."/>
            <person name="Hauser L."/>
            <person name="Kyrpides N."/>
            <person name="Mikhailova N."/>
            <person name="Romine M.F."/>
            <person name="Fredrickson J."/>
            <person name="Tiedje J."/>
            <person name="Richardson P."/>
        </authorList>
    </citation>
    <scope>NUCLEOTIDE SEQUENCE [LARGE SCALE GENOMIC DNA]</scope>
    <source>
        <strain>CN-32 / ATCC BAA-453</strain>
    </source>
</reference>
<keyword id="KW-0004">4Fe-4S</keyword>
<keyword id="KW-0963">Cytoplasm</keyword>
<keyword id="KW-0408">Iron</keyword>
<keyword id="KW-0411">Iron-sulfur</keyword>
<keyword id="KW-0479">Metal-binding</keyword>
<keyword id="KW-0949">S-adenosyl-L-methionine</keyword>
<keyword id="KW-0808">Transferase</keyword>
<proteinExistence type="inferred from homology"/>
<gene>
    <name evidence="1" type="primary">lipA</name>
    <name type="ordered locus">Sputcn32_2876</name>
</gene>
<name>LIPA_SHEPC</name>
<evidence type="ECO:0000255" key="1">
    <source>
        <dbReference type="HAMAP-Rule" id="MF_00206"/>
    </source>
</evidence>
<evidence type="ECO:0000255" key="2">
    <source>
        <dbReference type="PROSITE-ProRule" id="PRU01266"/>
    </source>
</evidence>
<accession>A4Y9G2</accession>
<protein>
    <recommendedName>
        <fullName evidence="1">Lipoyl synthase</fullName>
        <ecNumber evidence="1">2.8.1.8</ecNumber>
    </recommendedName>
    <alternativeName>
        <fullName evidence="1">Lip-syn</fullName>
        <shortName evidence="1">LS</shortName>
    </alternativeName>
    <alternativeName>
        <fullName evidence="1">Lipoate synthase</fullName>
    </alternativeName>
    <alternativeName>
        <fullName evidence="1">Lipoic acid synthase</fullName>
    </alternativeName>
    <alternativeName>
        <fullName evidence="1">Sulfur insertion protein LipA</fullName>
    </alternativeName>
</protein>
<sequence length="321" mass="36345">MNRPERLQPGVKLRDADKVSRIPVKIVPSERDTMLRKPDWLRVKLPASNQRILDIKQALRSNGLHSVCEEASCPNLAECFNHGTATFMILGAICTRRCPFCDVAHGRPLKPDAEEPVKLAQTIRDMKLKYVVITSVDRDDLRDGGAQHFADCIREIRKLNPAIKIEILVPDFRGRIDAALDILATEPPDVFNHNLETAPMHYRKARPGANYQWSLDLLKRFKERHPNVPTKSGLMMGLGETNEEIAQVLRDLREHKVEMLTLGQYLQPSKFHLPVERYVPPAEFDELKALADELGFTHAACGPLVRSSYHADLQAQGKEVK</sequence>
<feature type="chain" id="PRO_1000012277" description="Lipoyl synthase">
    <location>
        <begin position="1"/>
        <end position="321"/>
    </location>
</feature>
<feature type="domain" description="Radical SAM core" evidence="2">
    <location>
        <begin position="80"/>
        <end position="297"/>
    </location>
</feature>
<feature type="binding site" evidence="1">
    <location>
        <position position="68"/>
    </location>
    <ligand>
        <name>[4Fe-4S] cluster</name>
        <dbReference type="ChEBI" id="CHEBI:49883"/>
        <label>1</label>
    </ligand>
</feature>
<feature type="binding site" evidence="1">
    <location>
        <position position="73"/>
    </location>
    <ligand>
        <name>[4Fe-4S] cluster</name>
        <dbReference type="ChEBI" id="CHEBI:49883"/>
        <label>1</label>
    </ligand>
</feature>
<feature type="binding site" evidence="1">
    <location>
        <position position="79"/>
    </location>
    <ligand>
        <name>[4Fe-4S] cluster</name>
        <dbReference type="ChEBI" id="CHEBI:49883"/>
        <label>1</label>
    </ligand>
</feature>
<feature type="binding site" evidence="1">
    <location>
        <position position="94"/>
    </location>
    <ligand>
        <name>[4Fe-4S] cluster</name>
        <dbReference type="ChEBI" id="CHEBI:49883"/>
        <label>2</label>
        <note>4Fe-4S-S-AdoMet</note>
    </ligand>
</feature>
<feature type="binding site" evidence="1">
    <location>
        <position position="98"/>
    </location>
    <ligand>
        <name>[4Fe-4S] cluster</name>
        <dbReference type="ChEBI" id="CHEBI:49883"/>
        <label>2</label>
        <note>4Fe-4S-S-AdoMet</note>
    </ligand>
</feature>
<feature type="binding site" evidence="1">
    <location>
        <position position="101"/>
    </location>
    <ligand>
        <name>[4Fe-4S] cluster</name>
        <dbReference type="ChEBI" id="CHEBI:49883"/>
        <label>2</label>
        <note>4Fe-4S-S-AdoMet</note>
    </ligand>
</feature>
<feature type="binding site" evidence="1">
    <location>
        <position position="308"/>
    </location>
    <ligand>
        <name>[4Fe-4S] cluster</name>
        <dbReference type="ChEBI" id="CHEBI:49883"/>
        <label>1</label>
    </ligand>
</feature>
<organism>
    <name type="scientific">Shewanella putrefaciens (strain CN-32 / ATCC BAA-453)</name>
    <dbReference type="NCBI Taxonomy" id="319224"/>
    <lineage>
        <taxon>Bacteria</taxon>
        <taxon>Pseudomonadati</taxon>
        <taxon>Pseudomonadota</taxon>
        <taxon>Gammaproteobacteria</taxon>
        <taxon>Alteromonadales</taxon>
        <taxon>Shewanellaceae</taxon>
        <taxon>Shewanella</taxon>
    </lineage>
</organism>